<proteinExistence type="inferred from homology"/>
<evidence type="ECO:0000255" key="1">
    <source>
        <dbReference type="HAMAP-Rule" id="MF_00189"/>
    </source>
</evidence>
<gene>
    <name evidence="1" type="primary">yciB</name>
    <name type="ordered locus">R03236</name>
    <name type="ORF">SMc03853</name>
</gene>
<reference key="1">
    <citation type="journal article" date="2001" name="Proc. Natl. Acad. Sci. U.S.A.">
        <title>Analysis of the chromosome sequence of the legume symbiont Sinorhizobium meliloti strain 1021.</title>
        <authorList>
            <person name="Capela D."/>
            <person name="Barloy-Hubler F."/>
            <person name="Gouzy J."/>
            <person name="Bothe G."/>
            <person name="Ampe F."/>
            <person name="Batut J."/>
            <person name="Boistard P."/>
            <person name="Becker A."/>
            <person name="Boutry M."/>
            <person name="Cadieu E."/>
            <person name="Dreano S."/>
            <person name="Gloux S."/>
            <person name="Godrie T."/>
            <person name="Goffeau A."/>
            <person name="Kahn D."/>
            <person name="Kiss E."/>
            <person name="Lelaure V."/>
            <person name="Masuy D."/>
            <person name="Pohl T."/>
            <person name="Portetelle D."/>
            <person name="Puehler A."/>
            <person name="Purnelle B."/>
            <person name="Ramsperger U."/>
            <person name="Renard C."/>
            <person name="Thebault P."/>
            <person name="Vandenbol M."/>
            <person name="Weidner S."/>
            <person name="Galibert F."/>
        </authorList>
    </citation>
    <scope>NUCLEOTIDE SEQUENCE [LARGE SCALE GENOMIC DNA]</scope>
    <source>
        <strain>1021</strain>
    </source>
</reference>
<reference key="2">
    <citation type="journal article" date="2001" name="Science">
        <title>The composite genome of the legume symbiont Sinorhizobium meliloti.</title>
        <authorList>
            <person name="Galibert F."/>
            <person name="Finan T.M."/>
            <person name="Long S.R."/>
            <person name="Puehler A."/>
            <person name="Abola P."/>
            <person name="Ampe F."/>
            <person name="Barloy-Hubler F."/>
            <person name="Barnett M.J."/>
            <person name="Becker A."/>
            <person name="Boistard P."/>
            <person name="Bothe G."/>
            <person name="Boutry M."/>
            <person name="Bowser L."/>
            <person name="Buhrmester J."/>
            <person name="Cadieu E."/>
            <person name="Capela D."/>
            <person name="Chain P."/>
            <person name="Cowie A."/>
            <person name="Davis R.W."/>
            <person name="Dreano S."/>
            <person name="Federspiel N.A."/>
            <person name="Fisher R.F."/>
            <person name="Gloux S."/>
            <person name="Godrie T."/>
            <person name="Goffeau A."/>
            <person name="Golding B."/>
            <person name="Gouzy J."/>
            <person name="Gurjal M."/>
            <person name="Hernandez-Lucas I."/>
            <person name="Hong A."/>
            <person name="Huizar L."/>
            <person name="Hyman R.W."/>
            <person name="Jones T."/>
            <person name="Kahn D."/>
            <person name="Kahn M.L."/>
            <person name="Kalman S."/>
            <person name="Keating D.H."/>
            <person name="Kiss E."/>
            <person name="Komp C."/>
            <person name="Lelaure V."/>
            <person name="Masuy D."/>
            <person name="Palm C."/>
            <person name="Peck M.C."/>
            <person name="Pohl T.M."/>
            <person name="Portetelle D."/>
            <person name="Purnelle B."/>
            <person name="Ramsperger U."/>
            <person name="Surzycki R."/>
            <person name="Thebault P."/>
            <person name="Vandenbol M."/>
            <person name="Vorhoelter F.J."/>
            <person name="Weidner S."/>
            <person name="Wells D.H."/>
            <person name="Wong K."/>
            <person name="Yeh K.-C."/>
            <person name="Batut J."/>
        </authorList>
    </citation>
    <scope>NUCLEOTIDE SEQUENCE [LARGE SCALE GENOMIC DNA]</scope>
    <source>
        <strain>1021</strain>
    </source>
</reference>
<sequence length="210" mass="23369">MSTIEAAKPKTEVSPLLKLVLELGPLMVFFFANSRGEWLAGRFPALAELGGPIFIATGLFMAATAAALIASWIMTRTLPMMPLVSGIVVFVFGALTLWLQNDTFIKMKPTIVNTLFGAILLGGLLFGKSLLGYVFHAAFKLDEEGWRKLTIRWGVFFLFLAVLNEVIWRSFSTDFWVAFKVWGTMPITILFTLAQMPLIMKHSLEQDSAE</sequence>
<protein>
    <recommendedName>
        <fullName evidence="1">Inner membrane-spanning protein YciB</fullName>
    </recommendedName>
</protein>
<keyword id="KW-0997">Cell inner membrane</keyword>
<keyword id="KW-1003">Cell membrane</keyword>
<keyword id="KW-0472">Membrane</keyword>
<keyword id="KW-1185">Reference proteome</keyword>
<keyword id="KW-0812">Transmembrane</keyword>
<keyword id="KW-1133">Transmembrane helix</keyword>
<name>YCIB_RHIME</name>
<comment type="function">
    <text evidence="1">Plays a role in cell envelope biogenesis, maintenance of cell envelope integrity and membrane homeostasis.</text>
</comment>
<comment type="subcellular location">
    <subcellularLocation>
        <location evidence="1">Cell inner membrane</location>
        <topology evidence="1">Multi-pass membrane protein</topology>
    </subcellularLocation>
</comment>
<comment type="similarity">
    <text evidence="1">Belongs to the YciB family.</text>
</comment>
<dbReference type="EMBL" id="AL591688">
    <property type="protein sequence ID" value="CAC47815.1"/>
    <property type="molecule type" value="Genomic_DNA"/>
</dbReference>
<dbReference type="RefSeq" id="NP_387342.1">
    <property type="nucleotide sequence ID" value="NC_003047.1"/>
</dbReference>
<dbReference type="RefSeq" id="WP_010970512.1">
    <property type="nucleotide sequence ID" value="NC_003047.1"/>
</dbReference>
<dbReference type="EnsemblBacteria" id="CAC47815">
    <property type="protein sequence ID" value="CAC47815"/>
    <property type="gene ID" value="SMc03853"/>
</dbReference>
<dbReference type="KEGG" id="sme:SMc03853"/>
<dbReference type="PATRIC" id="fig|266834.11.peg.4789"/>
<dbReference type="eggNOG" id="COG2917">
    <property type="taxonomic scope" value="Bacteria"/>
</dbReference>
<dbReference type="HOGENOM" id="CLU_089554_1_1_5"/>
<dbReference type="OrthoDB" id="9788219at2"/>
<dbReference type="Proteomes" id="UP000001976">
    <property type="component" value="Chromosome"/>
</dbReference>
<dbReference type="GO" id="GO:0005886">
    <property type="term" value="C:plasma membrane"/>
    <property type="evidence" value="ECO:0007669"/>
    <property type="project" value="UniProtKB-SubCell"/>
</dbReference>
<dbReference type="HAMAP" id="MF_00189">
    <property type="entry name" value="YciB"/>
    <property type="match status" value="1"/>
</dbReference>
<dbReference type="InterPro" id="IPR006008">
    <property type="entry name" value="YciB"/>
</dbReference>
<dbReference type="NCBIfam" id="TIGR00997">
    <property type="entry name" value="ispZ"/>
    <property type="match status" value="1"/>
</dbReference>
<dbReference type="NCBIfam" id="NF001323">
    <property type="entry name" value="PRK00259.1-1"/>
    <property type="match status" value="1"/>
</dbReference>
<dbReference type="PANTHER" id="PTHR36917:SF1">
    <property type="entry name" value="INNER MEMBRANE-SPANNING PROTEIN YCIB"/>
    <property type="match status" value="1"/>
</dbReference>
<dbReference type="PANTHER" id="PTHR36917">
    <property type="entry name" value="INTRACELLULAR SEPTATION PROTEIN A-RELATED"/>
    <property type="match status" value="1"/>
</dbReference>
<dbReference type="Pfam" id="PF04279">
    <property type="entry name" value="IspA"/>
    <property type="match status" value="1"/>
</dbReference>
<accession>Q92L49</accession>
<organism>
    <name type="scientific">Rhizobium meliloti (strain 1021)</name>
    <name type="common">Ensifer meliloti</name>
    <name type="synonym">Sinorhizobium meliloti</name>
    <dbReference type="NCBI Taxonomy" id="266834"/>
    <lineage>
        <taxon>Bacteria</taxon>
        <taxon>Pseudomonadati</taxon>
        <taxon>Pseudomonadota</taxon>
        <taxon>Alphaproteobacteria</taxon>
        <taxon>Hyphomicrobiales</taxon>
        <taxon>Rhizobiaceae</taxon>
        <taxon>Sinorhizobium/Ensifer group</taxon>
        <taxon>Sinorhizobium</taxon>
    </lineage>
</organism>
<feature type="chain" id="PRO_0000206544" description="Inner membrane-spanning protein YciB">
    <location>
        <begin position="1"/>
        <end position="210"/>
    </location>
</feature>
<feature type="transmembrane region" description="Helical" evidence="1">
    <location>
        <begin position="12"/>
        <end position="32"/>
    </location>
</feature>
<feature type="transmembrane region" description="Helical" evidence="1">
    <location>
        <begin position="53"/>
        <end position="73"/>
    </location>
</feature>
<feature type="transmembrane region" description="Helical" evidence="1">
    <location>
        <begin position="78"/>
        <end position="98"/>
    </location>
</feature>
<feature type="transmembrane region" description="Helical" evidence="1">
    <location>
        <begin position="115"/>
        <end position="135"/>
    </location>
</feature>
<feature type="transmembrane region" description="Helical" evidence="1">
    <location>
        <begin position="148"/>
        <end position="168"/>
    </location>
</feature>
<feature type="transmembrane region" description="Helical" evidence="1">
    <location>
        <begin position="175"/>
        <end position="195"/>
    </location>
</feature>